<reference key="1">
    <citation type="journal article" date="2004" name="Nat. Biotechnol.">
        <title>Complete sequence and comparative genome analysis of the dairy bacterium Streptococcus thermophilus.</title>
        <authorList>
            <person name="Bolotin A."/>
            <person name="Quinquis B."/>
            <person name="Renault P."/>
            <person name="Sorokin A."/>
            <person name="Ehrlich S.D."/>
            <person name="Kulakauskas S."/>
            <person name="Lapidus A."/>
            <person name="Goltsman E."/>
            <person name="Mazur M."/>
            <person name="Pusch G.D."/>
            <person name="Fonstein M."/>
            <person name="Overbeek R."/>
            <person name="Kyprides N."/>
            <person name="Purnelle B."/>
            <person name="Prozzi D."/>
            <person name="Ngui K."/>
            <person name="Masuy D."/>
            <person name="Hancy F."/>
            <person name="Burteau S."/>
            <person name="Boutry M."/>
            <person name="Delcour J."/>
            <person name="Goffeau A."/>
            <person name="Hols P."/>
        </authorList>
    </citation>
    <scope>NUCLEOTIDE SEQUENCE [LARGE SCALE GENOMIC DNA]</scope>
    <source>
        <strain>ATCC BAA-250 / LMG 18311</strain>
    </source>
</reference>
<protein>
    <recommendedName>
        <fullName evidence="1">Ribonuclease Y</fullName>
        <shortName evidence="1">RNase Y</shortName>
        <ecNumber evidence="1">3.1.-.-</ecNumber>
    </recommendedName>
</protein>
<name>RNY_STRT2</name>
<sequence>MINMIILVVFALIGLVVGYSAISIKLSKAKEQAETILLKAEQDAVNLRSQAEHDADHLRVTAERESKAQRKELLLEAKEKARKYREDIEEEFKSERQELKQMENRLTERATSLDRKDENLSSKELALEKKEQSLADKSKHLNEREENVTQLEAEKQAELERIGQMTIAEAREVILTETENNLTHEIATRIKDAEAQIKDTVDKKAKNLLAQAMQRLSGDYVTEQTVTTVHLPDDNMKGRIIGREGRNIRTLESLTGIDVIIDDTPEVVVLSGFDPIRREIARMTLEALIKDGRIHPARIEELVEKSRKEMDNRIREYGEEAAYEIGAMNLHPDLIKIMGRLQFRTSYGQNVLRHSVEVGKLAGIMASELGENVALARRAGFLHDMGKAIDKEVEGSHVEIGTEFARKYKEHPVVVNAIASHHGDVEPESVIAVIVAAADALSSARPGARNESVENYVKRLRDLEEIASSFDGVQTSFALQAGREIRIMVHPNKISDDEVTILSHKIREQIEKNLDYPGNIKVTVIREFRAVDYAK</sequence>
<proteinExistence type="inferred from homology"/>
<organism>
    <name type="scientific">Streptococcus thermophilus (strain ATCC BAA-250 / LMG 18311)</name>
    <dbReference type="NCBI Taxonomy" id="264199"/>
    <lineage>
        <taxon>Bacteria</taxon>
        <taxon>Bacillati</taxon>
        <taxon>Bacillota</taxon>
        <taxon>Bacilli</taxon>
        <taxon>Lactobacillales</taxon>
        <taxon>Streptococcaceae</taxon>
        <taxon>Streptococcus</taxon>
    </lineage>
</organism>
<evidence type="ECO:0000255" key="1">
    <source>
        <dbReference type="HAMAP-Rule" id="MF_00335"/>
    </source>
</evidence>
<evidence type="ECO:0000255" key="2">
    <source>
        <dbReference type="PROSITE-ProRule" id="PRU01175"/>
    </source>
</evidence>
<evidence type="ECO:0000256" key="3">
    <source>
        <dbReference type="SAM" id="MobiDB-lite"/>
    </source>
</evidence>
<gene>
    <name evidence="1" type="primary">rny</name>
    <name type="ordered locus">stu0397</name>
</gene>
<keyword id="KW-1003">Cell membrane</keyword>
<keyword id="KW-0255">Endonuclease</keyword>
<keyword id="KW-0378">Hydrolase</keyword>
<keyword id="KW-0472">Membrane</keyword>
<keyword id="KW-0540">Nuclease</keyword>
<keyword id="KW-1185">Reference proteome</keyword>
<keyword id="KW-0694">RNA-binding</keyword>
<keyword id="KW-0812">Transmembrane</keyword>
<keyword id="KW-1133">Transmembrane helix</keyword>
<comment type="function">
    <text evidence="1">Endoribonuclease that initiates mRNA decay.</text>
</comment>
<comment type="subcellular location">
    <subcellularLocation>
        <location evidence="1">Cell membrane</location>
        <topology evidence="1">Single-pass membrane protein</topology>
    </subcellularLocation>
</comment>
<comment type="similarity">
    <text evidence="1">Belongs to the RNase Y family.</text>
</comment>
<dbReference type="EC" id="3.1.-.-" evidence="1"/>
<dbReference type="EMBL" id="CP000023">
    <property type="protein sequence ID" value="AAV60115.1"/>
    <property type="molecule type" value="Genomic_DNA"/>
</dbReference>
<dbReference type="RefSeq" id="WP_011225535.1">
    <property type="nucleotide sequence ID" value="NC_006448.1"/>
</dbReference>
<dbReference type="SMR" id="Q5M5Q8"/>
<dbReference type="STRING" id="264199.stu0397"/>
<dbReference type="KEGG" id="stl:stu0397"/>
<dbReference type="eggNOG" id="COG1418">
    <property type="taxonomic scope" value="Bacteria"/>
</dbReference>
<dbReference type="eggNOG" id="COG4372">
    <property type="taxonomic scope" value="Bacteria"/>
</dbReference>
<dbReference type="HOGENOM" id="CLU_028328_1_0_9"/>
<dbReference type="Proteomes" id="UP000001170">
    <property type="component" value="Chromosome"/>
</dbReference>
<dbReference type="GO" id="GO:0005886">
    <property type="term" value="C:plasma membrane"/>
    <property type="evidence" value="ECO:0007669"/>
    <property type="project" value="UniProtKB-SubCell"/>
</dbReference>
<dbReference type="GO" id="GO:0003723">
    <property type="term" value="F:RNA binding"/>
    <property type="evidence" value="ECO:0007669"/>
    <property type="project" value="UniProtKB-UniRule"/>
</dbReference>
<dbReference type="GO" id="GO:0004521">
    <property type="term" value="F:RNA endonuclease activity"/>
    <property type="evidence" value="ECO:0007669"/>
    <property type="project" value="UniProtKB-UniRule"/>
</dbReference>
<dbReference type="GO" id="GO:0006402">
    <property type="term" value="P:mRNA catabolic process"/>
    <property type="evidence" value="ECO:0007669"/>
    <property type="project" value="UniProtKB-UniRule"/>
</dbReference>
<dbReference type="CDD" id="cd00077">
    <property type="entry name" value="HDc"/>
    <property type="match status" value="1"/>
</dbReference>
<dbReference type="CDD" id="cd22431">
    <property type="entry name" value="KH-I_RNaseY"/>
    <property type="match status" value="1"/>
</dbReference>
<dbReference type="FunFam" id="1.10.3210.10:FF:000003">
    <property type="entry name" value="Ribonuclease Y"/>
    <property type="match status" value="1"/>
</dbReference>
<dbReference type="FunFam" id="3.30.1370.10:FF:000006">
    <property type="entry name" value="Ribonuclease Y"/>
    <property type="match status" value="1"/>
</dbReference>
<dbReference type="Gene3D" id="1.10.3210.10">
    <property type="entry name" value="Hypothetical protein af1432"/>
    <property type="match status" value="1"/>
</dbReference>
<dbReference type="Gene3D" id="3.30.1370.10">
    <property type="entry name" value="K Homology domain, type 1"/>
    <property type="match status" value="1"/>
</dbReference>
<dbReference type="HAMAP" id="MF_00335">
    <property type="entry name" value="RNase_Y"/>
    <property type="match status" value="1"/>
</dbReference>
<dbReference type="InterPro" id="IPR003607">
    <property type="entry name" value="HD/PDEase_dom"/>
</dbReference>
<dbReference type="InterPro" id="IPR006674">
    <property type="entry name" value="HD_domain"/>
</dbReference>
<dbReference type="InterPro" id="IPR006675">
    <property type="entry name" value="HDIG_dom"/>
</dbReference>
<dbReference type="InterPro" id="IPR004087">
    <property type="entry name" value="KH_dom"/>
</dbReference>
<dbReference type="InterPro" id="IPR004088">
    <property type="entry name" value="KH_dom_type_1"/>
</dbReference>
<dbReference type="InterPro" id="IPR036612">
    <property type="entry name" value="KH_dom_type_1_sf"/>
</dbReference>
<dbReference type="InterPro" id="IPR017705">
    <property type="entry name" value="Ribonuclease_Y"/>
</dbReference>
<dbReference type="InterPro" id="IPR022711">
    <property type="entry name" value="RNase_Y_N"/>
</dbReference>
<dbReference type="NCBIfam" id="TIGR00277">
    <property type="entry name" value="HDIG"/>
    <property type="match status" value="1"/>
</dbReference>
<dbReference type="NCBIfam" id="NF000997">
    <property type="entry name" value="PRK00106.1"/>
    <property type="match status" value="1"/>
</dbReference>
<dbReference type="NCBIfam" id="TIGR03319">
    <property type="entry name" value="RNase_Y"/>
    <property type="match status" value="1"/>
</dbReference>
<dbReference type="PANTHER" id="PTHR12826">
    <property type="entry name" value="RIBONUCLEASE Y"/>
    <property type="match status" value="1"/>
</dbReference>
<dbReference type="PANTHER" id="PTHR12826:SF15">
    <property type="entry name" value="RIBONUCLEASE Y"/>
    <property type="match status" value="1"/>
</dbReference>
<dbReference type="Pfam" id="PF01966">
    <property type="entry name" value="HD"/>
    <property type="match status" value="1"/>
</dbReference>
<dbReference type="Pfam" id="PF00013">
    <property type="entry name" value="KH_1"/>
    <property type="match status" value="1"/>
</dbReference>
<dbReference type="Pfam" id="PF12072">
    <property type="entry name" value="RNase_Y_N"/>
    <property type="match status" value="1"/>
</dbReference>
<dbReference type="SMART" id="SM00471">
    <property type="entry name" value="HDc"/>
    <property type="match status" value="1"/>
</dbReference>
<dbReference type="SMART" id="SM00322">
    <property type="entry name" value="KH"/>
    <property type="match status" value="1"/>
</dbReference>
<dbReference type="SUPFAM" id="SSF54791">
    <property type="entry name" value="Eukaryotic type KH-domain (KH-domain type I)"/>
    <property type="match status" value="1"/>
</dbReference>
<dbReference type="SUPFAM" id="SSF109604">
    <property type="entry name" value="HD-domain/PDEase-like"/>
    <property type="match status" value="1"/>
</dbReference>
<dbReference type="PROSITE" id="PS51831">
    <property type="entry name" value="HD"/>
    <property type="match status" value="1"/>
</dbReference>
<dbReference type="PROSITE" id="PS50084">
    <property type="entry name" value="KH_TYPE_1"/>
    <property type="match status" value="1"/>
</dbReference>
<feature type="chain" id="PRO_0000344952" description="Ribonuclease Y">
    <location>
        <begin position="1"/>
        <end position="535"/>
    </location>
</feature>
<feature type="transmembrane region" description="Helical" evidence="1">
    <location>
        <begin position="4"/>
        <end position="24"/>
    </location>
</feature>
<feature type="domain" description="KH" evidence="1">
    <location>
        <begin position="225"/>
        <end position="285"/>
    </location>
</feature>
<feature type="domain" description="HD" evidence="2">
    <location>
        <begin position="351"/>
        <end position="444"/>
    </location>
</feature>
<feature type="region of interest" description="Disordered" evidence="3">
    <location>
        <begin position="103"/>
        <end position="149"/>
    </location>
</feature>
<accession>Q5M5Q8</accession>